<evidence type="ECO:0000255" key="1"/>
<evidence type="ECO:0000305" key="2"/>
<protein>
    <recommendedName>
        <fullName>Uncharacterized protein BB_0032</fullName>
    </recommendedName>
</protein>
<sequence>MKEVDENSNVELFEVKLKPILGIEPKVYVFLTTIILLLSLISTLIIIPKFKNPGAYLKINSNIENTYIYLNEKYIGRTPLNKYINATEGVLRAKRMGFKTYEQRIKIHNKFFGNYSLQINLELVDPEKIIKQRQKELSIMVKIKNINENTKLIPVFSLISSELKEHPKYIKKFLKDSIPYLNSTEMFKDFLNSYKAIYSIDQDNSNQEEIWNSLKTNFDLENRAIFWFLENLDKDLKILTKNAPWVKTLAKTLDNENIQLISKNEKINIKLPGFKKINSNKIEKIQNYELNSLDSKNISLKSTYNVKEFLIQEQNVTKYEYQDFLKENPKWALNNKENLIKEQLVDENYLKNFNQIGLNEAITGISYFSAIEYANWYSKKLPTGFKARLPISQEWELYQKEPNKNPLNINEISKKVGFWNLMQNSSFNEIAIFKNEKNFYSENSNFYSLITEIRTYSQQNNNLLNASTKASFLKNWSSPNIGFRLIVSKE</sequence>
<accession>O51063</accession>
<name>Y032_BORBU</name>
<comment type="subcellular location">
    <subcellularLocation>
        <location evidence="2">Membrane</location>
        <topology evidence="2">Single-pass membrane protein</topology>
    </subcellularLocation>
</comment>
<dbReference type="EMBL" id="AE000783">
    <property type="protein sequence ID" value="AAC66427.1"/>
    <property type="molecule type" value="Genomic_DNA"/>
</dbReference>
<dbReference type="PIR" id="H70103">
    <property type="entry name" value="H70103"/>
</dbReference>
<dbReference type="RefSeq" id="NP_212166.1">
    <property type="nucleotide sequence ID" value="NC_001318.1"/>
</dbReference>
<dbReference type="RefSeq" id="WP_002658342.1">
    <property type="nucleotide sequence ID" value="NC_001318.1"/>
</dbReference>
<dbReference type="STRING" id="224326.BB_0032"/>
<dbReference type="PaxDb" id="224326-BB_0032"/>
<dbReference type="EnsemblBacteria" id="AAC66427">
    <property type="protein sequence ID" value="AAC66427"/>
    <property type="gene ID" value="BB_0032"/>
</dbReference>
<dbReference type="KEGG" id="bbu:BB_0032"/>
<dbReference type="PATRIC" id="fig|224326.49.peg.431"/>
<dbReference type="HOGENOM" id="CLU_557435_0_0_12"/>
<dbReference type="OrthoDB" id="350046at2"/>
<dbReference type="Proteomes" id="UP000001807">
    <property type="component" value="Chromosome"/>
</dbReference>
<dbReference type="GO" id="GO:0016020">
    <property type="term" value="C:membrane"/>
    <property type="evidence" value="ECO:0007669"/>
    <property type="project" value="UniProtKB-SubCell"/>
</dbReference>
<dbReference type="Gene3D" id="3.90.1580.10">
    <property type="entry name" value="paralog of FGE (formylglycine-generating enzyme)"/>
    <property type="match status" value="1"/>
</dbReference>
<dbReference type="InterPro" id="IPR016187">
    <property type="entry name" value="CTDL_fold"/>
</dbReference>
<dbReference type="InterPro" id="IPR013229">
    <property type="entry name" value="PEGA"/>
</dbReference>
<dbReference type="InterPro" id="IPR005532">
    <property type="entry name" value="SUMF_dom"/>
</dbReference>
<dbReference type="InterPro" id="IPR042095">
    <property type="entry name" value="SUMF_sf"/>
</dbReference>
<dbReference type="Pfam" id="PF03781">
    <property type="entry name" value="FGE-sulfatase"/>
    <property type="match status" value="1"/>
</dbReference>
<dbReference type="Pfam" id="PF08308">
    <property type="entry name" value="PEGA"/>
    <property type="match status" value="1"/>
</dbReference>
<dbReference type="SUPFAM" id="SSF56436">
    <property type="entry name" value="C-type lectin-like"/>
    <property type="match status" value="1"/>
</dbReference>
<gene>
    <name type="ordered locus">BB_0032</name>
</gene>
<keyword id="KW-0472">Membrane</keyword>
<keyword id="KW-1185">Reference proteome</keyword>
<keyword id="KW-0812">Transmembrane</keyword>
<keyword id="KW-1133">Transmembrane helix</keyword>
<proteinExistence type="predicted"/>
<reference key="1">
    <citation type="journal article" date="1997" name="Nature">
        <title>Genomic sequence of a Lyme disease spirochaete, Borrelia burgdorferi.</title>
        <authorList>
            <person name="Fraser C.M."/>
            <person name="Casjens S."/>
            <person name="Huang W.M."/>
            <person name="Sutton G.G."/>
            <person name="Clayton R.A."/>
            <person name="Lathigra R."/>
            <person name="White O."/>
            <person name="Ketchum K.A."/>
            <person name="Dodson R.J."/>
            <person name="Hickey E.K."/>
            <person name="Gwinn M.L."/>
            <person name="Dougherty B.A."/>
            <person name="Tomb J.-F."/>
            <person name="Fleischmann R.D."/>
            <person name="Richardson D.L."/>
            <person name="Peterson J.D."/>
            <person name="Kerlavage A.R."/>
            <person name="Quackenbush J."/>
            <person name="Salzberg S.L."/>
            <person name="Hanson M."/>
            <person name="van Vugt R."/>
            <person name="Palmer N."/>
            <person name="Adams M.D."/>
            <person name="Gocayne J.D."/>
            <person name="Weidman J.F."/>
            <person name="Utterback T.R."/>
            <person name="Watthey L."/>
            <person name="McDonald L.A."/>
            <person name="Artiach P."/>
            <person name="Bowman C."/>
            <person name="Garland S.A."/>
            <person name="Fujii C."/>
            <person name="Cotton M.D."/>
            <person name="Horst K."/>
            <person name="Roberts K.M."/>
            <person name="Hatch B."/>
            <person name="Smith H.O."/>
            <person name="Venter J.C."/>
        </authorList>
    </citation>
    <scope>NUCLEOTIDE SEQUENCE [LARGE SCALE GENOMIC DNA]</scope>
    <source>
        <strain>ATCC 35210 / DSM 4680 / CIP 102532 / B31</strain>
    </source>
</reference>
<feature type="chain" id="PRO_0000174370" description="Uncharacterized protein BB_0032">
    <location>
        <begin position="1"/>
        <end position="490"/>
    </location>
</feature>
<feature type="transmembrane region" description="Helical" evidence="1">
    <location>
        <begin position="27"/>
        <end position="47"/>
    </location>
</feature>
<organism>
    <name type="scientific">Borreliella burgdorferi (strain ATCC 35210 / DSM 4680 / CIP 102532 / B31)</name>
    <name type="common">Borrelia burgdorferi</name>
    <dbReference type="NCBI Taxonomy" id="224326"/>
    <lineage>
        <taxon>Bacteria</taxon>
        <taxon>Pseudomonadati</taxon>
        <taxon>Spirochaetota</taxon>
        <taxon>Spirochaetia</taxon>
        <taxon>Spirochaetales</taxon>
        <taxon>Borreliaceae</taxon>
        <taxon>Borreliella</taxon>
    </lineage>
</organism>